<feature type="chain" id="PRO_0000451413" description="Evasin P1172">
    <location>
        <begin position="1" status="less than"/>
        <end position="94"/>
    </location>
</feature>
<feature type="glycosylation site" description="N-linked (GlcNAc...) asparagine" evidence="2">
    <location>
        <position position="38"/>
    </location>
</feature>
<feature type="glycosylation site" description="N-linked (GlcNAc...) asparagine" evidence="2">
    <location>
        <position position="44"/>
    </location>
</feature>
<feature type="glycosylation site" description="N-linked (GlcNAc...) asparagine" evidence="2">
    <location>
        <position position="53"/>
    </location>
</feature>
<feature type="glycosylation site" description="N-linked (GlcNAc...) asparagine" evidence="2">
    <location>
        <position position="80"/>
    </location>
</feature>
<feature type="disulfide bond" evidence="1">
    <location>
        <begin position="35"/>
        <end position="54"/>
    </location>
</feature>
<feature type="disulfide bond" evidence="1">
    <location>
        <begin position="39"/>
        <end position="56"/>
    </location>
</feature>
<feature type="disulfide bond" evidence="1">
    <location>
        <begin position="50"/>
        <end position="67"/>
    </location>
</feature>
<feature type="non-terminal residue" evidence="6">
    <location>
        <position position="1"/>
    </location>
</feature>
<evidence type="ECO:0000250" key="1">
    <source>
        <dbReference type="UniProtKB" id="P0C8E8"/>
    </source>
</evidence>
<evidence type="ECO:0000255" key="2">
    <source>
        <dbReference type="PROSITE-ProRule" id="PRU00498"/>
    </source>
</evidence>
<evidence type="ECO:0000269" key="3">
    <source>
    </source>
</evidence>
<evidence type="ECO:0000303" key="4">
    <source>
    </source>
</evidence>
<evidence type="ECO:0000305" key="5"/>
<evidence type="ECO:0000312" key="6">
    <source>
        <dbReference type="EMBL" id="JAB83717.1"/>
    </source>
</evidence>
<protein>
    <recommendedName>
        <fullName evidence="4">Evasin P1172</fullName>
    </recommendedName>
</protein>
<keyword id="KW-1015">Disulfide bond</keyword>
<keyword id="KW-0325">Glycoprotein</keyword>
<keyword id="KW-0964">Secreted</keyword>
<proteinExistence type="evidence at transcript level"/>
<accession>V5I2G9</accession>
<dbReference type="EMBL" id="GANP01000751">
    <property type="protein sequence ID" value="JAB83717.1"/>
    <property type="molecule type" value="mRNA"/>
</dbReference>
<dbReference type="GO" id="GO:0005576">
    <property type="term" value="C:extracellular region"/>
    <property type="evidence" value="ECO:0007669"/>
    <property type="project" value="UniProtKB-SubCell"/>
</dbReference>
<dbReference type="GO" id="GO:0019958">
    <property type="term" value="F:C-X-C chemokine binding"/>
    <property type="evidence" value="ECO:0000314"/>
    <property type="project" value="UniProtKB"/>
</dbReference>
<organism evidence="6">
    <name type="scientific">Ixodes ricinus</name>
    <name type="common">Common tick</name>
    <name type="synonym">Acarus ricinus</name>
    <dbReference type="NCBI Taxonomy" id="34613"/>
    <lineage>
        <taxon>Eukaryota</taxon>
        <taxon>Metazoa</taxon>
        <taxon>Ecdysozoa</taxon>
        <taxon>Arthropoda</taxon>
        <taxon>Chelicerata</taxon>
        <taxon>Arachnida</taxon>
        <taxon>Acari</taxon>
        <taxon>Parasitiformes</taxon>
        <taxon>Ixodida</taxon>
        <taxon>Ixodoidea</taxon>
        <taxon>Ixodidae</taxon>
        <taxon>Ixodinae</taxon>
        <taxon>Ixodes</taxon>
    </lineage>
</organism>
<name>E1172_IXORI</name>
<comment type="function">
    <text evidence="3">Salivary chemokine-binding protein which binds to host chemokines CXCL1, CXCL2, CXCL5 and CXCL8.</text>
</comment>
<comment type="subcellular location">
    <subcellularLocation>
        <location evidence="5">Secreted</location>
    </subcellularLocation>
</comment>
<reference evidence="6" key="1">
    <citation type="journal article" date="2015" name="Sci. Rep.">
        <title>Tissue- and time-dependent transcription in Ixodes ricinus salivary glands and midguts when blood feeding on the vertebrate host.</title>
        <authorList>
            <person name="Kotsyfakis M."/>
            <person name="Schwarz A."/>
            <person name="Erhart J."/>
            <person name="Ribeiro J.M."/>
        </authorList>
    </citation>
    <scope>NUCLEOTIDE SEQUENCE [LARGE SCALE MRNA]</scope>
</reference>
<reference evidence="5" key="2">
    <citation type="journal article" date="2019" name="J. Biol. Chem.">
        <title>A knottin scaffold directs the CXC-chemokine-binding specificity of tick evasins.</title>
        <authorList>
            <person name="Lee A.W."/>
            <person name="Deruaz M."/>
            <person name="Lynch C."/>
            <person name="Davies G."/>
            <person name="Singh K."/>
            <person name="Alenazi Y."/>
            <person name="Eaton J.R.O."/>
            <person name="Kawamura A."/>
            <person name="Shaw J."/>
            <person name="Proudfoot A.E.I."/>
            <person name="Dias J.M."/>
            <person name="Bhattacharya S."/>
        </authorList>
    </citation>
    <scope>FUNCTION</scope>
</reference>
<sequence>FLLKSQLCYCLFGIELIGAGIHALHEDEIFTVDYCGTNCTKQSNGSWTTCPGNCSCYHEDGKTDGFCLSTEYTDFTQFPNLTSEEMDAATPRPE</sequence>